<name>TPP1_RAT</name>
<keyword id="KW-0068">Autocatalytic cleavage</keyword>
<keyword id="KW-0106">Calcium</keyword>
<keyword id="KW-0903">Direct protein sequencing</keyword>
<keyword id="KW-1015">Disulfide bond</keyword>
<keyword id="KW-0325">Glycoprotein</keyword>
<keyword id="KW-0378">Hydrolase</keyword>
<keyword id="KW-0458">Lysosome</keyword>
<keyword id="KW-0479">Metal-binding</keyword>
<keyword id="KW-0645">Protease</keyword>
<keyword id="KW-1185">Reference proteome</keyword>
<keyword id="KW-0720">Serine protease</keyword>
<keyword id="KW-0732">Signal</keyword>
<keyword id="KW-0865">Zymogen</keyword>
<organism>
    <name type="scientific">Rattus norvegicus</name>
    <name type="common">Rat</name>
    <dbReference type="NCBI Taxonomy" id="10116"/>
    <lineage>
        <taxon>Eukaryota</taxon>
        <taxon>Metazoa</taxon>
        <taxon>Chordata</taxon>
        <taxon>Craniata</taxon>
        <taxon>Vertebrata</taxon>
        <taxon>Euteleostomi</taxon>
        <taxon>Mammalia</taxon>
        <taxon>Eutheria</taxon>
        <taxon>Euarchontoglires</taxon>
        <taxon>Glires</taxon>
        <taxon>Rodentia</taxon>
        <taxon>Myomorpha</taxon>
        <taxon>Muroidea</taxon>
        <taxon>Muridae</taxon>
        <taxon>Murinae</taxon>
        <taxon>Rattus</taxon>
    </lineage>
</organism>
<reference key="1">
    <citation type="submission" date="2000-05" db="EMBL/GenBank/DDBJ databases">
        <title>Rat tripeptidyl peptidase I: its purification and molecular cloning.</title>
        <authorList>
            <person name="Du P."/>
            <person name="Kato S."/>
            <person name="Li Y."/>
            <person name="Maeda T."/>
            <person name="Yamane T."/>
            <person name="Yamamoto S."/>
            <person name="Fujiwara M."/>
            <person name="Yamamoto Y."/>
            <person name="Nishi K."/>
            <person name="Ohkubo I."/>
        </authorList>
    </citation>
    <scope>NUCLEOTIDE SEQUENCE [MRNA]</scope>
    <source>
        <tissue>Liver</tissue>
    </source>
</reference>
<reference key="2">
    <citation type="journal article" date="1998" name="Biochim. Biophys. Acta">
        <title>Purification and characterisation of a tripeptidyl aminopeptidase I from rat spleen.</title>
        <authorList>
            <person name="Vines D.J."/>
            <person name="Warburton M.J."/>
        </authorList>
    </citation>
    <scope>PROTEIN SEQUENCE OF 196-217; 374-392 AND 395-429</scope>
    <scope>FUNCTION</scope>
    <scope>BIOPHYSICOCHEMICAL PROPERTIES</scope>
    <source>
        <tissue>Spleen</tissue>
    </source>
</reference>
<reference key="3">
    <citation type="journal article" date="2013" name="J. Proteome Res.">
        <title>Site-specific glycan-peptide analysis for determination of N-glycoproteome heterogeneity.</title>
        <authorList>
            <person name="Parker B.L."/>
            <person name="Thaysen-Andersen M."/>
            <person name="Solis N."/>
            <person name="Scott N.E."/>
            <person name="Larsen M.R."/>
            <person name="Graham M.E."/>
            <person name="Packer N.H."/>
            <person name="Cordwell S.J."/>
        </authorList>
    </citation>
    <scope>GLYCOSYLATION [LARGE SCALE ANALYSIS] AT ASN-222</scope>
    <scope>IDENTIFICATION BY MASS SPECTROMETRY [LARGE SCALE ANALYSIS]</scope>
    <source>
        <tissue>Brain</tissue>
    </source>
</reference>
<protein>
    <recommendedName>
        <fullName>Tripeptidyl-peptidase 1</fullName>
        <shortName>TPP-1</shortName>
        <ecNumber>3.4.14.9</ecNumber>
    </recommendedName>
    <alternativeName>
        <fullName>Tripeptidyl aminopeptidase</fullName>
    </alternativeName>
    <alternativeName>
        <fullName>Tripeptidyl-peptidase I</fullName>
        <shortName>TPP-I</shortName>
    </alternativeName>
</protein>
<accession>Q9EQV6</accession>
<proteinExistence type="evidence at protein level"/>
<feature type="signal peptide" evidence="1">
    <location>
        <begin position="1"/>
        <end position="19"/>
    </location>
</feature>
<feature type="propeptide" id="PRO_0000027384" description="Removed in mature form" evidence="3">
    <location>
        <begin position="20"/>
        <end position="195"/>
    </location>
</feature>
<feature type="chain" id="PRO_0000027385" description="Tripeptidyl-peptidase 1">
    <location>
        <begin position="196"/>
        <end position="563"/>
    </location>
</feature>
<feature type="domain" description="Peptidase S53">
    <location>
        <begin position="199"/>
        <end position="563"/>
    </location>
</feature>
<feature type="active site" description="Charge relay system" evidence="1">
    <location>
        <position position="272"/>
    </location>
</feature>
<feature type="active site" description="Charge relay system" evidence="1">
    <location>
        <position position="276"/>
    </location>
</feature>
<feature type="active site" description="Charge relay system" evidence="1">
    <location>
        <position position="475"/>
    </location>
</feature>
<feature type="binding site" evidence="1">
    <location>
        <position position="517"/>
    </location>
    <ligand>
        <name>Ca(2+)</name>
        <dbReference type="ChEBI" id="CHEBI:29108"/>
    </ligand>
</feature>
<feature type="binding site" evidence="1">
    <location>
        <position position="518"/>
    </location>
    <ligand>
        <name>Ca(2+)</name>
        <dbReference type="ChEBI" id="CHEBI:29108"/>
    </ligand>
</feature>
<feature type="binding site" evidence="1">
    <location>
        <position position="539"/>
    </location>
    <ligand>
        <name>Ca(2+)</name>
        <dbReference type="ChEBI" id="CHEBI:29108"/>
    </ligand>
</feature>
<feature type="binding site" evidence="1">
    <location>
        <position position="541"/>
    </location>
    <ligand>
        <name>Ca(2+)</name>
        <dbReference type="ChEBI" id="CHEBI:29108"/>
    </ligand>
</feature>
<feature type="binding site" evidence="1">
    <location>
        <position position="543"/>
    </location>
    <ligand>
        <name>Ca(2+)</name>
        <dbReference type="ChEBI" id="CHEBI:29108"/>
    </ligand>
</feature>
<feature type="glycosylation site" description="N-linked (GlcNAc...) asparagine" evidence="2">
    <location>
        <position position="210"/>
    </location>
</feature>
<feature type="glycosylation site" description="N-linked (GlcNAc...) asparagine" evidence="5">
    <location>
        <position position="222"/>
    </location>
</feature>
<feature type="glycosylation site" description="N-linked (GlcNAc...) asparagine" evidence="2">
    <location>
        <position position="286"/>
    </location>
</feature>
<feature type="glycosylation site" description="N-linked (GlcNAc...) asparagine" evidence="2">
    <location>
        <position position="313"/>
    </location>
</feature>
<feature type="glycosylation site" description="N-linked (GlcNAc...) asparagine" evidence="2">
    <location>
        <position position="443"/>
    </location>
</feature>
<feature type="disulfide bond" evidence="1">
    <location>
        <begin position="111"/>
        <end position="122"/>
    </location>
</feature>
<feature type="disulfide bond" evidence="1">
    <location>
        <begin position="365"/>
        <end position="526"/>
    </location>
</feature>
<feature type="disulfide bond" evidence="1">
    <location>
        <begin position="522"/>
        <end position="537"/>
    </location>
</feature>
<feature type="sequence conflict" description="In Ref. 2; AA sequence." evidence="4" ref="2">
    <original>N</original>
    <variation>A</variation>
    <location>
        <position position="210"/>
    </location>
</feature>
<feature type="sequence conflict" description="In Ref. 2; AA sequence." evidence="4" ref="2">
    <original>VG</original>
    <variation>SQ</variation>
    <location>
        <begin position="216"/>
        <end position="217"/>
    </location>
</feature>
<feature type="sequence conflict" description="In Ref. 2; AA sequence." evidence="4" ref="2">
    <original>GGT</original>
    <variation>SPP</variation>
    <location>
        <begin position="389"/>
        <end position="391"/>
    </location>
</feature>
<sequence length="563" mass="61332">MGLQARFLGLLALVIAGKCTHSPEPDQRWMLPPGWVSLGRVDPEEELSLTFALKQQNLDRLSELVQAVSDPSSPRYGKYLTLEDVAELVQPSPLTLRTVQKWLLAAGARDCHSVTTQDFLTCWLSVRQAELLLPGAEFHRYVGGPAKTHIIRSPHPYQLPQALAPHVDLVAGLHRFPPLSSPRQRPEPQGVGPVGLHLGVTPSVLRQRYNLTARDVGSGTTNNSQACAQFLEQYFHNSDLTEFMRLFGSSFAHQASVARVVGKQGRGRAGIEASLDVEYLMSAGANISTWVYSSPGRHEAQEPFLQWLLLLSNESSLPHVHTVSYGDDEDSLSSVYIQRVNTEFMKAAARGLTLLFASGDTGAGCWSVSGRHKFRPSFPASSPYVTTVGGTSFKNPFLVTNEVVDYISGGGFSNVFPQPSYQEEAVAQFLKSSSHLPPSSYFNASGRAYPDVAALSDGYWVVSNMVPIPWVSGTSASTPVFGGILSLINEHRLLNGRPPLGFLNPRLYQQHGAGLFDVTHGCHESCLNEEVEGQGFCSGPGWDPVTGWGTPNFPALLKTLLNP</sequence>
<dbReference type="EC" id="3.4.14.9"/>
<dbReference type="EMBL" id="AB043870">
    <property type="protein sequence ID" value="BAB18570.1"/>
    <property type="molecule type" value="mRNA"/>
</dbReference>
<dbReference type="RefSeq" id="NP_112647.1">
    <property type="nucleotide sequence ID" value="NM_031357.1"/>
</dbReference>
<dbReference type="SMR" id="Q9EQV6"/>
<dbReference type="FunCoup" id="Q9EQV6">
    <property type="interactions" value="613"/>
</dbReference>
<dbReference type="IntAct" id="Q9EQV6">
    <property type="interactions" value="1"/>
</dbReference>
<dbReference type="STRING" id="10116.ENSRNOP00000026280"/>
<dbReference type="MEROPS" id="S53.003"/>
<dbReference type="GlyCosmos" id="Q9EQV6">
    <property type="glycosylation" value="5 sites, 7 glycans"/>
</dbReference>
<dbReference type="GlyGen" id="Q9EQV6">
    <property type="glycosylation" value="5 sites, 7 N-linked glycans (3 sites)"/>
</dbReference>
<dbReference type="iPTMnet" id="Q9EQV6"/>
<dbReference type="PhosphoSitePlus" id="Q9EQV6"/>
<dbReference type="jPOST" id="Q9EQV6"/>
<dbReference type="PaxDb" id="10116-ENSRNOP00000026280"/>
<dbReference type="GeneID" id="83534"/>
<dbReference type="KEGG" id="rno:83534"/>
<dbReference type="UCSC" id="RGD:621296">
    <property type="organism name" value="rat"/>
</dbReference>
<dbReference type="AGR" id="RGD:621296"/>
<dbReference type="CTD" id="1200"/>
<dbReference type="RGD" id="621296">
    <property type="gene designation" value="Tpp1"/>
</dbReference>
<dbReference type="eggNOG" id="ENOG502QR6D">
    <property type="taxonomic scope" value="Eukaryota"/>
</dbReference>
<dbReference type="InParanoid" id="Q9EQV6"/>
<dbReference type="PhylomeDB" id="Q9EQV6"/>
<dbReference type="BRENDA" id="3.4.14.9">
    <property type="organism ID" value="5301"/>
</dbReference>
<dbReference type="PRO" id="PR:Q9EQV6"/>
<dbReference type="Proteomes" id="UP000002494">
    <property type="component" value="Unplaced"/>
</dbReference>
<dbReference type="GO" id="GO:0005794">
    <property type="term" value="C:Golgi apparatus"/>
    <property type="evidence" value="ECO:0000250"/>
    <property type="project" value="UniProtKB"/>
</dbReference>
<dbReference type="GO" id="GO:0005764">
    <property type="term" value="C:lysosome"/>
    <property type="evidence" value="ECO:0000250"/>
    <property type="project" value="UniProtKB"/>
</dbReference>
<dbReference type="GO" id="GO:0042470">
    <property type="term" value="C:melanosome"/>
    <property type="evidence" value="ECO:0007669"/>
    <property type="project" value="UniProtKB-SubCell"/>
</dbReference>
<dbReference type="GO" id="GO:0045121">
    <property type="term" value="C:membrane raft"/>
    <property type="evidence" value="ECO:0000250"/>
    <property type="project" value="UniProtKB"/>
</dbReference>
<dbReference type="GO" id="GO:0055037">
    <property type="term" value="C:recycling endosome"/>
    <property type="evidence" value="ECO:0000250"/>
    <property type="project" value="UniProtKB"/>
</dbReference>
<dbReference type="GO" id="GO:0004175">
    <property type="term" value="F:endopeptidase activity"/>
    <property type="evidence" value="ECO:0000314"/>
    <property type="project" value="RGD"/>
</dbReference>
<dbReference type="GO" id="GO:0035727">
    <property type="term" value="F:lysophosphatidic acid binding"/>
    <property type="evidence" value="ECO:0000250"/>
    <property type="project" value="UniProtKB"/>
</dbReference>
<dbReference type="GO" id="GO:0046872">
    <property type="term" value="F:metal ion binding"/>
    <property type="evidence" value="ECO:0007669"/>
    <property type="project" value="UniProtKB-KW"/>
</dbReference>
<dbReference type="GO" id="GO:0008233">
    <property type="term" value="F:peptidase activity"/>
    <property type="evidence" value="ECO:0000250"/>
    <property type="project" value="UniProtKB"/>
</dbReference>
<dbReference type="GO" id="GO:0042277">
    <property type="term" value="F:peptide binding"/>
    <property type="evidence" value="ECO:0000314"/>
    <property type="project" value="RGD"/>
</dbReference>
<dbReference type="GO" id="GO:0004252">
    <property type="term" value="F:serine-type endopeptidase activity"/>
    <property type="evidence" value="ECO:0007669"/>
    <property type="project" value="InterPro"/>
</dbReference>
<dbReference type="GO" id="GO:0008236">
    <property type="term" value="F:serine-type peptidase activity"/>
    <property type="evidence" value="ECO:0000250"/>
    <property type="project" value="UniProtKB"/>
</dbReference>
<dbReference type="GO" id="GO:0120146">
    <property type="term" value="F:sulfatide binding"/>
    <property type="evidence" value="ECO:0000250"/>
    <property type="project" value="UniProtKB"/>
</dbReference>
<dbReference type="GO" id="GO:0008240">
    <property type="term" value="F:tripeptidyl-peptidase activity"/>
    <property type="evidence" value="ECO:0000314"/>
    <property type="project" value="RGD"/>
</dbReference>
<dbReference type="GO" id="GO:0045453">
    <property type="term" value="P:bone resorption"/>
    <property type="evidence" value="ECO:0000250"/>
    <property type="project" value="UniProtKB"/>
</dbReference>
<dbReference type="GO" id="GO:0007417">
    <property type="term" value="P:central nervous system development"/>
    <property type="evidence" value="ECO:0000318"/>
    <property type="project" value="GO_Central"/>
</dbReference>
<dbReference type="GO" id="GO:0030855">
    <property type="term" value="P:epithelial cell differentiation"/>
    <property type="evidence" value="ECO:0000266"/>
    <property type="project" value="RGD"/>
</dbReference>
<dbReference type="GO" id="GO:1905146">
    <property type="term" value="P:lysosomal protein catabolic process"/>
    <property type="evidence" value="ECO:0000266"/>
    <property type="project" value="RGD"/>
</dbReference>
<dbReference type="GO" id="GO:0007040">
    <property type="term" value="P:lysosome organization"/>
    <property type="evidence" value="ECO:0000266"/>
    <property type="project" value="RGD"/>
</dbReference>
<dbReference type="GO" id="GO:0007399">
    <property type="term" value="P:nervous system development"/>
    <property type="evidence" value="ECO:0000250"/>
    <property type="project" value="UniProtKB"/>
</dbReference>
<dbReference type="GO" id="GO:0050885">
    <property type="term" value="P:neuromuscular process controlling balance"/>
    <property type="evidence" value="ECO:0000266"/>
    <property type="project" value="RGD"/>
</dbReference>
<dbReference type="GO" id="GO:0043171">
    <property type="term" value="P:peptide catabolic process"/>
    <property type="evidence" value="ECO:0000250"/>
    <property type="project" value="UniProtKB"/>
</dbReference>
<dbReference type="GO" id="GO:0030163">
    <property type="term" value="P:protein catabolic process"/>
    <property type="evidence" value="ECO:0000314"/>
    <property type="project" value="RGD"/>
</dbReference>
<dbReference type="GO" id="GO:0070198">
    <property type="term" value="P:protein localization to chromosome, telomeric region"/>
    <property type="evidence" value="ECO:0000266"/>
    <property type="project" value="RGD"/>
</dbReference>
<dbReference type="GO" id="GO:0006508">
    <property type="term" value="P:proteolysis"/>
    <property type="evidence" value="ECO:0000250"/>
    <property type="project" value="UniProtKB"/>
</dbReference>
<dbReference type="CDD" id="cd04056">
    <property type="entry name" value="Peptidases_S53"/>
    <property type="match status" value="1"/>
</dbReference>
<dbReference type="CDD" id="cd11377">
    <property type="entry name" value="Pro-peptidase_S53"/>
    <property type="match status" value="1"/>
</dbReference>
<dbReference type="FunFam" id="3.40.50.200:FF:000012">
    <property type="entry name" value="Tripeptidyl-peptidase 1 preproprotein"/>
    <property type="match status" value="1"/>
</dbReference>
<dbReference type="Gene3D" id="3.40.50.200">
    <property type="entry name" value="Peptidase S8/S53 domain"/>
    <property type="match status" value="1"/>
</dbReference>
<dbReference type="InterPro" id="IPR000209">
    <property type="entry name" value="Peptidase_S8/S53_dom"/>
</dbReference>
<dbReference type="InterPro" id="IPR036852">
    <property type="entry name" value="Peptidase_S8/S53_dom_sf"/>
</dbReference>
<dbReference type="InterPro" id="IPR015366">
    <property type="entry name" value="S53_propep"/>
</dbReference>
<dbReference type="InterPro" id="IPR030400">
    <property type="entry name" value="Sedolisin_dom"/>
</dbReference>
<dbReference type="InterPro" id="IPR050819">
    <property type="entry name" value="Tripeptidyl-peptidase_I"/>
</dbReference>
<dbReference type="PANTHER" id="PTHR14218">
    <property type="entry name" value="PROTEASE S8 TRIPEPTIDYL PEPTIDASE I CLN2"/>
    <property type="match status" value="1"/>
</dbReference>
<dbReference type="PANTHER" id="PTHR14218:SF15">
    <property type="entry name" value="TRIPEPTIDYL-PEPTIDASE 1"/>
    <property type="match status" value="1"/>
</dbReference>
<dbReference type="Pfam" id="PF00082">
    <property type="entry name" value="Peptidase_S8"/>
    <property type="match status" value="1"/>
</dbReference>
<dbReference type="Pfam" id="PF09286">
    <property type="entry name" value="Pro-kuma_activ"/>
    <property type="match status" value="1"/>
</dbReference>
<dbReference type="SMART" id="SM00944">
    <property type="entry name" value="Pro-kuma_activ"/>
    <property type="match status" value="1"/>
</dbReference>
<dbReference type="SUPFAM" id="SSF54897">
    <property type="entry name" value="Protease propeptides/inhibitors"/>
    <property type="match status" value="1"/>
</dbReference>
<dbReference type="SUPFAM" id="SSF52743">
    <property type="entry name" value="Subtilisin-like"/>
    <property type="match status" value="1"/>
</dbReference>
<dbReference type="PROSITE" id="PS51695">
    <property type="entry name" value="SEDOLISIN"/>
    <property type="match status" value="1"/>
</dbReference>
<comment type="function">
    <text evidence="3">Lysosomal serine protease with tripeptidyl-peptidase I activity. May act as a non-specific lysosomal peptidase which generates tripeptides from the breakdown products produced by lysosomal proteinases. Requires substrates with an unsubstituted N-terminus.</text>
</comment>
<comment type="catalytic activity">
    <reaction>
        <text>Release of an N-terminal tripeptide from a polypeptide, but also has endopeptidase activity.</text>
        <dbReference type="EC" id="3.4.14.9"/>
    </reaction>
</comment>
<comment type="cofactor">
    <cofactor evidence="1">
        <name>Ca(2+)</name>
        <dbReference type="ChEBI" id="CHEBI:29108"/>
    </cofactor>
    <text evidence="1">Binds 1 Ca(2+) ion per subunit.</text>
</comment>
<comment type="biophysicochemical properties">
    <phDependence>
        <text evidence="3">Optimum pH is 4. Unstable above pH 7.</text>
    </phDependence>
</comment>
<comment type="subunit">
    <text evidence="1">Monomer. Interacts with CLN5 (By similarity). Interacts with CLN3 (By similarity).</text>
</comment>
<comment type="subcellular location">
    <subcellularLocation>
        <location evidence="1">Lysosome</location>
    </subcellularLocation>
    <subcellularLocation>
        <location evidence="1">Melanosome</location>
    </subcellularLocation>
</comment>
<comment type="PTM">
    <text evidence="1">Activated by autocatalytic proteolytical processing upon acidification. N-glycosylation is required for processing and activity (By similarity).</text>
</comment>
<gene>
    <name type="primary">Tpp1</name>
    <name type="synonym">Cln2</name>
</gene>
<evidence type="ECO:0000250" key="1">
    <source>
        <dbReference type="UniProtKB" id="O14773"/>
    </source>
</evidence>
<evidence type="ECO:0000255" key="2"/>
<evidence type="ECO:0000269" key="3">
    <source>
    </source>
</evidence>
<evidence type="ECO:0000305" key="4"/>
<evidence type="ECO:0007744" key="5">
    <source>
    </source>
</evidence>